<dbReference type="EMBL" id="AJ272215">
    <property type="protein sequence ID" value="CAB75716.1"/>
    <property type="molecule type" value="mRNA"/>
</dbReference>
<dbReference type="EMBL" id="AF311885">
    <property type="protein sequence ID" value="AAG31158.1"/>
    <property type="molecule type" value="mRNA"/>
</dbReference>
<dbReference type="EMBL" id="AL035404">
    <property type="status" value="NOT_ANNOTATED_CDS"/>
    <property type="molecule type" value="Genomic_DNA"/>
</dbReference>
<dbReference type="EMBL" id="BC006087">
    <property type="protein sequence ID" value="AAH06087.1"/>
    <property type="molecule type" value="mRNA"/>
</dbReference>
<dbReference type="CCDS" id="CCDS439.1"/>
<dbReference type="RefSeq" id="NP_055386.2">
    <property type="nucleotide sequence ID" value="NM_014571.4"/>
</dbReference>
<dbReference type="SMR" id="Q9NQ87"/>
<dbReference type="BioGRID" id="117714">
    <property type="interactions" value="30"/>
</dbReference>
<dbReference type="FunCoup" id="Q9NQ87">
    <property type="interactions" value="1615"/>
</dbReference>
<dbReference type="IntAct" id="Q9NQ87">
    <property type="interactions" value="24"/>
</dbReference>
<dbReference type="MINT" id="Q9NQ87"/>
<dbReference type="STRING" id="9606.ENSP00000361943"/>
<dbReference type="GlyGen" id="Q9NQ87">
    <property type="glycosylation" value="4 sites"/>
</dbReference>
<dbReference type="iPTMnet" id="Q9NQ87"/>
<dbReference type="PhosphoSitePlus" id="Q9NQ87"/>
<dbReference type="BioMuta" id="HEYL"/>
<dbReference type="DMDM" id="146286205"/>
<dbReference type="MassIVE" id="Q9NQ87"/>
<dbReference type="PaxDb" id="9606-ENSP00000361943"/>
<dbReference type="PeptideAtlas" id="Q9NQ87"/>
<dbReference type="ProteomicsDB" id="82105"/>
<dbReference type="Antibodypedia" id="643">
    <property type="antibodies" value="332 antibodies from 26 providers"/>
</dbReference>
<dbReference type="DNASU" id="26508"/>
<dbReference type="Ensembl" id="ENST00000372852.4">
    <property type="protein sequence ID" value="ENSP00000361943.3"/>
    <property type="gene ID" value="ENSG00000163909.8"/>
</dbReference>
<dbReference type="GeneID" id="26508"/>
<dbReference type="KEGG" id="hsa:26508"/>
<dbReference type="MANE-Select" id="ENST00000372852.4">
    <property type="protein sequence ID" value="ENSP00000361943.3"/>
    <property type="RefSeq nucleotide sequence ID" value="NM_014571.4"/>
    <property type="RefSeq protein sequence ID" value="NP_055386.2"/>
</dbReference>
<dbReference type="UCSC" id="uc001cdp.4">
    <property type="organism name" value="human"/>
</dbReference>
<dbReference type="AGR" id="HGNC:4882"/>
<dbReference type="CTD" id="26508"/>
<dbReference type="DisGeNET" id="26508"/>
<dbReference type="GeneCards" id="HEYL"/>
<dbReference type="HGNC" id="HGNC:4882">
    <property type="gene designation" value="HEYL"/>
</dbReference>
<dbReference type="HPA" id="ENSG00000163909">
    <property type="expression patterns" value="Tissue enhanced (pancreas)"/>
</dbReference>
<dbReference type="MIM" id="609034">
    <property type="type" value="gene"/>
</dbReference>
<dbReference type="neXtProt" id="NX_Q9NQ87"/>
<dbReference type="OpenTargets" id="ENSG00000163909"/>
<dbReference type="PharmGKB" id="PA29260"/>
<dbReference type="VEuPathDB" id="HostDB:ENSG00000163909"/>
<dbReference type="eggNOG" id="KOG4304">
    <property type="taxonomic scope" value="Eukaryota"/>
</dbReference>
<dbReference type="GeneTree" id="ENSGT00940000161351"/>
<dbReference type="HOGENOM" id="CLU_048294_1_1_1"/>
<dbReference type="InParanoid" id="Q9NQ87"/>
<dbReference type="OMA" id="AFPVWPW"/>
<dbReference type="OrthoDB" id="6371181at2759"/>
<dbReference type="PAN-GO" id="Q9NQ87">
    <property type="GO annotations" value="6 GO annotations based on evolutionary models"/>
</dbReference>
<dbReference type="PhylomeDB" id="Q9NQ87"/>
<dbReference type="TreeFam" id="TF323617"/>
<dbReference type="PathwayCommons" id="Q9NQ87"/>
<dbReference type="Reactome" id="R-HSA-2122947">
    <property type="pathway name" value="NOTCH1 Intracellular Domain Regulates Transcription"/>
</dbReference>
<dbReference type="Reactome" id="R-HSA-2644606">
    <property type="pathway name" value="Constitutive Signaling by NOTCH1 PEST Domain Mutants"/>
</dbReference>
<dbReference type="Reactome" id="R-HSA-2894862">
    <property type="pathway name" value="Constitutive Signaling by NOTCH1 HD+PEST Domain Mutants"/>
</dbReference>
<dbReference type="Reactome" id="R-HSA-9013508">
    <property type="pathway name" value="NOTCH3 Intracellular Domain Regulates Transcription"/>
</dbReference>
<dbReference type="Reactome" id="R-HSA-9762293">
    <property type="pathway name" value="Regulation of CDH11 gene transcription"/>
</dbReference>
<dbReference type="SignaLink" id="Q9NQ87"/>
<dbReference type="SIGNOR" id="Q9NQ87"/>
<dbReference type="BioGRID-ORCS" id="26508">
    <property type="hits" value="6 hits in 1165 CRISPR screens"/>
</dbReference>
<dbReference type="ChiTaRS" id="HEYL">
    <property type="organism name" value="human"/>
</dbReference>
<dbReference type="GeneWiki" id="HEYL"/>
<dbReference type="GenomeRNAi" id="26508"/>
<dbReference type="Pharos" id="Q9NQ87">
    <property type="development level" value="Tbio"/>
</dbReference>
<dbReference type="PRO" id="PR:Q9NQ87"/>
<dbReference type="Proteomes" id="UP000005640">
    <property type="component" value="Chromosome 1"/>
</dbReference>
<dbReference type="RNAct" id="Q9NQ87">
    <property type="molecule type" value="protein"/>
</dbReference>
<dbReference type="Bgee" id="ENSG00000163909">
    <property type="expression patterns" value="Expressed in right coronary artery and 148 other cell types or tissues"/>
</dbReference>
<dbReference type="GO" id="GO:0000785">
    <property type="term" value="C:chromatin"/>
    <property type="evidence" value="ECO:0000247"/>
    <property type="project" value="NTNU_SB"/>
</dbReference>
<dbReference type="GO" id="GO:0005737">
    <property type="term" value="C:cytoplasm"/>
    <property type="evidence" value="ECO:0000250"/>
    <property type="project" value="UniProtKB"/>
</dbReference>
<dbReference type="GO" id="GO:0005654">
    <property type="term" value="C:nucleoplasm"/>
    <property type="evidence" value="ECO:0000304"/>
    <property type="project" value="Reactome"/>
</dbReference>
<dbReference type="GO" id="GO:0005634">
    <property type="term" value="C:nucleus"/>
    <property type="evidence" value="ECO:0000314"/>
    <property type="project" value="UniProtKB"/>
</dbReference>
<dbReference type="GO" id="GO:0050683">
    <property type="term" value="F:AF-1 domain binding"/>
    <property type="evidence" value="ECO:0000353"/>
    <property type="project" value="UniProtKB"/>
</dbReference>
<dbReference type="GO" id="GO:0001228">
    <property type="term" value="F:DNA-binding transcription activator activity, RNA polymerase II-specific"/>
    <property type="evidence" value="ECO:0007669"/>
    <property type="project" value="Ensembl"/>
</dbReference>
<dbReference type="GO" id="GO:0003700">
    <property type="term" value="F:DNA-binding transcription factor activity"/>
    <property type="evidence" value="ECO:0000314"/>
    <property type="project" value="UniProtKB"/>
</dbReference>
<dbReference type="GO" id="GO:0000981">
    <property type="term" value="F:DNA-binding transcription factor activity, RNA polymerase II-specific"/>
    <property type="evidence" value="ECO:0000314"/>
    <property type="project" value="UniProtKB"/>
</dbReference>
<dbReference type="GO" id="GO:0001227">
    <property type="term" value="F:DNA-binding transcription repressor activity, RNA polymerase II-specific"/>
    <property type="evidence" value="ECO:0000314"/>
    <property type="project" value="GO_Central"/>
</dbReference>
<dbReference type="GO" id="GO:0042803">
    <property type="term" value="F:protein homodimerization activity"/>
    <property type="evidence" value="ECO:0007669"/>
    <property type="project" value="Ensembl"/>
</dbReference>
<dbReference type="GO" id="GO:0000978">
    <property type="term" value="F:RNA polymerase II cis-regulatory region sequence-specific DNA binding"/>
    <property type="evidence" value="ECO:0000318"/>
    <property type="project" value="GO_Central"/>
</dbReference>
<dbReference type="GO" id="GO:0003180">
    <property type="term" value="P:aortic valve morphogenesis"/>
    <property type="evidence" value="ECO:0000304"/>
    <property type="project" value="BHF-UCL"/>
</dbReference>
<dbReference type="GO" id="GO:0003181">
    <property type="term" value="P:atrioventricular valve morphogenesis"/>
    <property type="evidence" value="ECO:0000250"/>
    <property type="project" value="BHF-UCL"/>
</dbReference>
<dbReference type="GO" id="GO:0060317">
    <property type="term" value="P:cardiac epithelial to mesenchymal transition"/>
    <property type="evidence" value="ECO:0000250"/>
    <property type="project" value="BHF-UCL"/>
</dbReference>
<dbReference type="GO" id="GO:0003208">
    <property type="term" value="P:cardiac ventricle morphogenesis"/>
    <property type="evidence" value="ECO:0000250"/>
    <property type="project" value="BHF-UCL"/>
</dbReference>
<dbReference type="GO" id="GO:0071773">
    <property type="term" value="P:cellular response to BMP stimulus"/>
    <property type="evidence" value="ECO:0007669"/>
    <property type="project" value="Ensembl"/>
</dbReference>
<dbReference type="GO" id="GO:0003203">
    <property type="term" value="P:endocardial cushion morphogenesis"/>
    <property type="evidence" value="ECO:0000250"/>
    <property type="project" value="BHF-UCL"/>
</dbReference>
<dbReference type="GO" id="GO:0003198">
    <property type="term" value="P:epithelial to mesenchymal transition involved in endocardial cushion formation"/>
    <property type="evidence" value="ECO:0000250"/>
    <property type="project" value="UniProtKB"/>
</dbReference>
<dbReference type="GO" id="GO:0032835">
    <property type="term" value="P:glomerulus development"/>
    <property type="evidence" value="ECO:0007669"/>
    <property type="project" value="Ensembl"/>
</dbReference>
<dbReference type="GO" id="GO:0014031">
    <property type="term" value="P:mesenchymal cell development"/>
    <property type="evidence" value="ECO:0000250"/>
    <property type="project" value="BHF-UCL"/>
</dbReference>
<dbReference type="GO" id="GO:0060766">
    <property type="term" value="P:negative regulation of androgen receptor signaling pathway"/>
    <property type="evidence" value="ECO:0000314"/>
    <property type="project" value="UniProtKB"/>
</dbReference>
<dbReference type="GO" id="GO:0043433">
    <property type="term" value="P:negative regulation of DNA-binding transcription factor activity"/>
    <property type="evidence" value="ECO:0000314"/>
    <property type="project" value="UniProtKB"/>
</dbReference>
<dbReference type="GO" id="GO:0045892">
    <property type="term" value="P:negative regulation of DNA-templated transcription"/>
    <property type="evidence" value="ECO:0000314"/>
    <property type="project" value="UniProtKB"/>
</dbReference>
<dbReference type="GO" id="GO:0010629">
    <property type="term" value="P:negative regulation of gene expression"/>
    <property type="evidence" value="ECO:0007669"/>
    <property type="project" value="Ensembl"/>
</dbReference>
<dbReference type="GO" id="GO:0007219">
    <property type="term" value="P:Notch signaling pathway"/>
    <property type="evidence" value="ECO:0000314"/>
    <property type="project" value="UniProtKB"/>
</dbReference>
<dbReference type="GO" id="GO:0003151">
    <property type="term" value="P:outflow tract morphogenesis"/>
    <property type="evidence" value="ECO:0000250"/>
    <property type="project" value="BHF-UCL"/>
</dbReference>
<dbReference type="GO" id="GO:0045666">
    <property type="term" value="P:positive regulation of neuron differentiation"/>
    <property type="evidence" value="ECO:0000250"/>
    <property type="project" value="UniProtKB"/>
</dbReference>
<dbReference type="GO" id="GO:0045944">
    <property type="term" value="P:positive regulation of transcription by RNA polymerase II"/>
    <property type="evidence" value="ECO:0000314"/>
    <property type="project" value="UniProtKB"/>
</dbReference>
<dbReference type="GO" id="GO:0072014">
    <property type="term" value="P:proximal tubule development"/>
    <property type="evidence" value="ECO:0007669"/>
    <property type="project" value="Ensembl"/>
</dbReference>
<dbReference type="GO" id="GO:0003184">
    <property type="term" value="P:pulmonary valve morphogenesis"/>
    <property type="evidence" value="ECO:0000250"/>
    <property type="project" value="BHF-UCL"/>
</dbReference>
<dbReference type="GO" id="GO:0050767">
    <property type="term" value="P:regulation of neurogenesis"/>
    <property type="evidence" value="ECO:0000318"/>
    <property type="project" value="GO_Central"/>
</dbReference>
<dbReference type="GO" id="GO:0035914">
    <property type="term" value="P:skeletal muscle cell differentiation"/>
    <property type="evidence" value="ECO:0007669"/>
    <property type="project" value="Ensembl"/>
</dbReference>
<dbReference type="GO" id="GO:0060412">
    <property type="term" value="P:ventricular septum morphogenesis"/>
    <property type="evidence" value="ECO:0000250"/>
    <property type="project" value="BHF-UCL"/>
</dbReference>
<dbReference type="CDD" id="cd11447">
    <property type="entry name" value="bHLH-O_HEYL"/>
    <property type="match status" value="1"/>
</dbReference>
<dbReference type="FunFam" id="4.10.280.10:FF:000012">
    <property type="entry name" value="hairy/enhancer-of-split related with YRPW motif protein 1"/>
    <property type="match status" value="1"/>
</dbReference>
<dbReference type="Gene3D" id="6.10.250.980">
    <property type="match status" value="1"/>
</dbReference>
<dbReference type="Gene3D" id="4.10.280.10">
    <property type="entry name" value="Helix-loop-helix DNA-binding domain"/>
    <property type="match status" value="1"/>
</dbReference>
<dbReference type="InterPro" id="IPR011598">
    <property type="entry name" value="bHLH_dom"/>
</dbReference>
<dbReference type="InterPro" id="IPR050370">
    <property type="entry name" value="HES_HEY"/>
</dbReference>
<dbReference type="InterPro" id="IPR036638">
    <property type="entry name" value="HLH_DNA-bd_sf"/>
</dbReference>
<dbReference type="InterPro" id="IPR003650">
    <property type="entry name" value="Orange_dom"/>
</dbReference>
<dbReference type="PANTHER" id="PTHR10985">
    <property type="entry name" value="BASIC HELIX-LOOP-HELIX TRANSCRIPTION FACTOR, HES-RELATED"/>
    <property type="match status" value="1"/>
</dbReference>
<dbReference type="Pfam" id="PF07527">
    <property type="entry name" value="Hairy_orange"/>
    <property type="match status" value="1"/>
</dbReference>
<dbReference type="Pfam" id="PF00010">
    <property type="entry name" value="HLH"/>
    <property type="match status" value="1"/>
</dbReference>
<dbReference type="SMART" id="SM00353">
    <property type="entry name" value="HLH"/>
    <property type="match status" value="1"/>
</dbReference>
<dbReference type="SMART" id="SM00511">
    <property type="entry name" value="ORANGE"/>
    <property type="match status" value="1"/>
</dbReference>
<dbReference type="SUPFAM" id="SSF47459">
    <property type="entry name" value="HLH, helix-loop-helix DNA-binding domain"/>
    <property type="match status" value="1"/>
</dbReference>
<dbReference type="SUPFAM" id="SSF158457">
    <property type="entry name" value="Orange domain-like"/>
    <property type="match status" value="1"/>
</dbReference>
<dbReference type="PROSITE" id="PS50888">
    <property type="entry name" value="BHLH"/>
    <property type="match status" value="1"/>
</dbReference>
<dbReference type="PROSITE" id="PS51054">
    <property type="entry name" value="ORANGE"/>
    <property type="match status" value="1"/>
</dbReference>
<reference key="1">
    <citation type="journal article" date="2000" name="Genomics">
        <title>Characterization of the human and mouse HEY1, HEY2, and HEYL genes: cloning, mapping, and mutation screening of a new bHLH gene family.</title>
        <authorList>
            <person name="Steidl C."/>
            <person name="Leimeister C."/>
            <person name="Klamt B."/>
            <person name="Maier M."/>
            <person name="Nanda I."/>
            <person name="Dixon M."/>
            <person name="Clarke R."/>
            <person name="Schmid M."/>
            <person name="Gessler M."/>
        </authorList>
    </citation>
    <scope>NUCLEOTIDE SEQUENCE [MRNA]</scope>
    <scope>VARIANT ARG-47</scope>
</reference>
<reference key="2">
    <citation type="journal article" date="2000" name="Proc. Natl. Acad. Sci. U.S.A.">
        <title>Members of the HRT family of basic helix-loop-helix proteins act as transcriptional repressors downstream of Notch signaling.</title>
        <authorList>
            <person name="Nakagawa O."/>
            <person name="McFadden D.G."/>
            <person name="Nakagawa M."/>
            <person name="Yanagisawa H."/>
            <person name="Hu T."/>
            <person name="Srivastava D."/>
            <person name="Olson E.N."/>
        </authorList>
    </citation>
    <scope>NUCLEOTIDE SEQUENCE [MRNA]</scope>
    <scope>VARIANT ARG-47</scope>
</reference>
<reference key="3">
    <citation type="journal article" date="2006" name="Nature">
        <title>The DNA sequence and biological annotation of human chromosome 1.</title>
        <authorList>
            <person name="Gregory S.G."/>
            <person name="Barlow K.F."/>
            <person name="McLay K.E."/>
            <person name="Kaul R."/>
            <person name="Swarbreck D."/>
            <person name="Dunham A."/>
            <person name="Scott C.E."/>
            <person name="Howe K.L."/>
            <person name="Woodfine K."/>
            <person name="Spencer C.C.A."/>
            <person name="Jones M.C."/>
            <person name="Gillson C."/>
            <person name="Searle S."/>
            <person name="Zhou Y."/>
            <person name="Kokocinski F."/>
            <person name="McDonald L."/>
            <person name="Evans R."/>
            <person name="Phillips K."/>
            <person name="Atkinson A."/>
            <person name="Cooper R."/>
            <person name="Jones C."/>
            <person name="Hall R.E."/>
            <person name="Andrews T.D."/>
            <person name="Lloyd C."/>
            <person name="Ainscough R."/>
            <person name="Almeida J.P."/>
            <person name="Ambrose K.D."/>
            <person name="Anderson F."/>
            <person name="Andrew R.W."/>
            <person name="Ashwell R.I.S."/>
            <person name="Aubin K."/>
            <person name="Babbage A.K."/>
            <person name="Bagguley C.L."/>
            <person name="Bailey J."/>
            <person name="Beasley H."/>
            <person name="Bethel G."/>
            <person name="Bird C.P."/>
            <person name="Bray-Allen S."/>
            <person name="Brown J.Y."/>
            <person name="Brown A.J."/>
            <person name="Buckley D."/>
            <person name="Burton J."/>
            <person name="Bye J."/>
            <person name="Carder C."/>
            <person name="Chapman J.C."/>
            <person name="Clark S.Y."/>
            <person name="Clarke G."/>
            <person name="Clee C."/>
            <person name="Cobley V."/>
            <person name="Collier R.E."/>
            <person name="Corby N."/>
            <person name="Coville G.J."/>
            <person name="Davies J."/>
            <person name="Deadman R."/>
            <person name="Dunn M."/>
            <person name="Earthrowl M."/>
            <person name="Ellington A.G."/>
            <person name="Errington H."/>
            <person name="Frankish A."/>
            <person name="Frankland J."/>
            <person name="French L."/>
            <person name="Garner P."/>
            <person name="Garnett J."/>
            <person name="Gay L."/>
            <person name="Ghori M.R.J."/>
            <person name="Gibson R."/>
            <person name="Gilby L.M."/>
            <person name="Gillett W."/>
            <person name="Glithero R.J."/>
            <person name="Grafham D.V."/>
            <person name="Griffiths C."/>
            <person name="Griffiths-Jones S."/>
            <person name="Grocock R."/>
            <person name="Hammond S."/>
            <person name="Harrison E.S.I."/>
            <person name="Hart E."/>
            <person name="Haugen E."/>
            <person name="Heath P.D."/>
            <person name="Holmes S."/>
            <person name="Holt K."/>
            <person name="Howden P.J."/>
            <person name="Hunt A.R."/>
            <person name="Hunt S.E."/>
            <person name="Hunter G."/>
            <person name="Isherwood J."/>
            <person name="James R."/>
            <person name="Johnson C."/>
            <person name="Johnson D."/>
            <person name="Joy A."/>
            <person name="Kay M."/>
            <person name="Kershaw J.K."/>
            <person name="Kibukawa M."/>
            <person name="Kimberley A.M."/>
            <person name="King A."/>
            <person name="Knights A.J."/>
            <person name="Lad H."/>
            <person name="Laird G."/>
            <person name="Lawlor S."/>
            <person name="Leongamornlert D.A."/>
            <person name="Lloyd D.M."/>
            <person name="Loveland J."/>
            <person name="Lovell J."/>
            <person name="Lush M.J."/>
            <person name="Lyne R."/>
            <person name="Martin S."/>
            <person name="Mashreghi-Mohammadi M."/>
            <person name="Matthews L."/>
            <person name="Matthews N.S.W."/>
            <person name="McLaren S."/>
            <person name="Milne S."/>
            <person name="Mistry S."/>
            <person name="Moore M.J.F."/>
            <person name="Nickerson T."/>
            <person name="O'Dell C.N."/>
            <person name="Oliver K."/>
            <person name="Palmeiri A."/>
            <person name="Palmer S.A."/>
            <person name="Parker A."/>
            <person name="Patel D."/>
            <person name="Pearce A.V."/>
            <person name="Peck A.I."/>
            <person name="Pelan S."/>
            <person name="Phelps K."/>
            <person name="Phillimore B.J."/>
            <person name="Plumb R."/>
            <person name="Rajan J."/>
            <person name="Raymond C."/>
            <person name="Rouse G."/>
            <person name="Saenphimmachak C."/>
            <person name="Sehra H.K."/>
            <person name="Sheridan E."/>
            <person name="Shownkeen R."/>
            <person name="Sims S."/>
            <person name="Skuce C.D."/>
            <person name="Smith M."/>
            <person name="Steward C."/>
            <person name="Subramanian S."/>
            <person name="Sycamore N."/>
            <person name="Tracey A."/>
            <person name="Tromans A."/>
            <person name="Van Helmond Z."/>
            <person name="Wall M."/>
            <person name="Wallis J.M."/>
            <person name="White S."/>
            <person name="Whitehead S.L."/>
            <person name="Wilkinson J.E."/>
            <person name="Willey D.L."/>
            <person name="Williams H."/>
            <person name="Wilming L."/>
            <person name="Wray P.W."/>
            <person name="Wu Z."/>
            <person name="Coulson A."/>
            <person name="Vaudin M."/>
            <person name="Sulston J.E."/>
            <person name="Durbin R.M."/>
            <person name="Hubbard T."/>
            <person name="Wooster R."/>
            <person name="Dunham I."/>
            <person name="Carter N.P."/>
            <person name="McVean G."/>
            <person name="Ross M.T."/>
            <person name="Harrow J."/>
            <person name="Olson M.V."/>
            <person name="Beck S."/>
            <person name="Rogers J."/>
            <person name="Bentley D.R."/>
        </authorList>
    </citation>
    <scope>NUCLEOTIDE SEQUENCE [LARGE SCALE GENOMIC DNA]</scope>
</reference>
<reference key="4">
    <citation type="journal article" date="2004" name="Genome Res.">
        <title>The status, quality, and expansion of the NIH full-length cDNA project: the Mammalian Gene Collection (MGC).</title>
        <authorList>
            <consortium name="The MGC Project Team"/>
        </authorList>
    </citation>
    <scope>NUCLEOTIDE SEQUENCE [LARGE SCALE MRNA]</scope>
    <source>
        <tissue>Muscle</tissue>
    </source>
</reference>
<reference key="5">
    <citation type="journal article" date="2000" name="Biochem. Biophys. Res. Commun.">
        <title>Comparative analysis of the human and mouse Hey1 promoter: Hey genes are new Notch target genes.</title>
        <authorList>
            <person name="Maier M.M."/>
            <person name="Gessler M."/>
        </authorList>
    </citation>
    <scope>INDUCTION</scope>
</reference>
<reference key="6">
    <citation type="journal article" date="2004" name="J. Biol. Chem.">
        <title>Hairy-related transcription factors inhibit GATA-dependent cardiac gene expression through a signal-responsive mechanism.</title>
        <authorList>
            <person name="Kathiriya I.S."/>
            <person name="King I.N."/>
            <person name="Murakami M."/>
            <person name="Nakagawa M."/>
            <person name="Astle J.M."/>
            <person name="Gardner K.A."/>
            <person name="Gerard R.D."/>
            <person name="Olson E.N."/>
            <person name="Srivastava D."/>
            <person name="Nakagawa O."/>
        </authorList>
    </citation>
    <scope>FUNCTION</scope>
</reference>
<comment type="function">
    <text evidence="1 8">Downstream effector of Notch signaling which may be required for cardiovascular development (By similarity). Transcriptional repressor which binds preferentially to the canonical E box sequence 5'-CACGTG-3' (By similarity). Represses transcription by the cardiac transcriptional activators GATA4 and GATA6.</text>
</comment>
<comment type="subunit">
    <text evidence="1">Self-associates. Interacts with GATA4, GATA6, HES1, HEY1 and HEY2. Interacts with HDAC1, NCOR1 and SIN3A.</text>
</comment>
<comment type="interaction">
    <interactant intactId="EBI-751092">
        <id>Q9NQ87</id>
    </interactant>
    <interactant intactId="EBI-11524452">
        <id>Q8N9N5-2</id>
        <label>BANP</label>
    </interactant>
    <organismsDiffer>false</organismsDiffer>
    <experiments>3</experiments>
</comment>
<comment type="interaction">
    <interactant intactId="EBI-751092">
        <id>Q9NQ87</id>
    </interactant>
    <interactant intactId="EBI-11962084">
        <id>Q3LI66</id>
        <label>KRTAP6-2</label>
    </interactant>
    <organismsDiffer>false</organismsDiffer>
    <experiments>3</experiments>
</comment>
<comment type="interaction">
    <interactant intactId="EBI-751092">
        <id>Q9NQ87</id>
    </interactant>
    <interactant intactId="EBI-724076">
        <id>Q99750</id>
        <label>MDFI</label>
    </interactant>
    <organismsDiffer>false</organismsDiffer>
    <experiments>7</experiments>
</comment>
<comment type="interaction">
    <interactant intactId="EBI-751092">
        <id>Q9NQ87</id>
    </interactant>
    <interactant intactId="EBI-373552">
        <id>Q96CS7</id>
        <label>PLEKHB2</label>
    </interactant>
    <organismsDiffer>false</organismsDiffer>
    <experiments>3</experiments>
</comment>
<comment type="interaction">
    <interactant intactId="EBI-751092">
        <id>Q9NQ87</id>
    </interactant>
    <interactant intactId="EBI-740322">
        <id>Q93062</id>
        <label>RBPMS</label>
    </interactant>
    <organismsDiffer>false</organismsDiffer>
    <experiments>4</experiments>
</comment>
<comment type="interaction">
    <interactant intactId="EBI-751092">
        <id>Q9NQ87</id>
    </interactant>
    <interactant intactId="EBI-1050213">
        <id>Q96KN7</id>
        <label>RPGRIP1</label>
    </interactant>
    <organismsDiffer>false</organismsDiffer>
    <experiments>3</experiments>
</comment>
<comment type="subcellular location">
    <subcellularLocation>
        <location evidence="2 3">Nucleus</location>
    </subcellularLocation>
</comment>
<comment type="induction">
    <text evidence="6">By activation of the Notch signaling pathway.</text>
</comment>
<comment type="similarity">
    <text evidence="9">Belongs to the HEY family.</text>
</comment>
<evidence type="ECO:0000250" key="1"/>
<evidence type="ECO:0000255" key="2">
    <source>
        <dbReference type="PROSITE-ProRule" id="PRU00380"/>
    </source>
</evidence>
<evidence type="ECO:0000255" key="3">
    <source>
        <dbReference type="PROSITE-ProRule" id="PRU00981"/>
    </source>
</evidence>
<evidence type="ECO:0000256" key="4">
    <source>
        <dbReference type="SAM" id="MobiDB-lite"/>
    </source>
</evidence>
<evidence type="ECO:0000269" key="5">
    <source>
    </source>
</evidence>
<evidence type="ECO:0000269" key="6">
    <source>
    </source>
</evidence>
<evidence type="ECO:0000269" key="7">
    <source>
    </source>
</evidence>
<evidence type="ECO:0000269" key="8">
    <source>
    </source>
</evidence>
<evidence type="ECO:0000305" key="9"/>
<name>HEYL_HUMAN</name>
<accession>Q9NQ87</accession>
<accession>Q5TG99</accession>
<organism>
    <name type="scientific">Homo sapiens</name>
    <name type="common">Human</name>
    <dbReference type="NCBI Taxonomy" id="9606"/>
    <lineage>
        <taxon>Eukaryota</taxon>
        <taxon>Metazoa</taxon>
        <taxon>Chordata</taxon>
        <taxon>Craniata</taxon>
        <taxon>Vertebrata</taxon>
        <taxon>Euteleostomi</taxon>
        <taxon>Mammalia</taxon>
        <taxon>Eutheria</taxon>
        <taxon>Euarchontoglires</taxon>
        <taxon>Primates</taxon>
        <taxon>Haplorrhini</taxon>
        <taxon>Catarrhini</taxon>
        <taxon>Hominidae</taxon>
        <taxon>Homo</taxon>
    </lineage>
</organism>
<gene>
    <name type="primary">HEYL</name>
    <name type="synonym">BHLHB33</name>
    <name type="synonym">HRT3</name>
</gene>
<sequence>MKRPKEPSGSDGESDGPIDVGQEGQLSQMARPLSTPSSSQMQARKKHRGIIEKRRRDRINSSLSELRRLVPTAFEKQGSSKLEKAEVLQMTVDHLKMLHATGGTGFFDARALAVDFRSIGFRECLTEVIRYLGVLEGPSSRADPVRIRLLSHLNSYAAEMEPSPTPTGPLAFPAWPWSFFHSCPGLPALSNQLAILGRVPSPVLPGVSSPAYPIPALRTAPLRRATGIILPARRNVLPSRGASSTRRARPLERPATPVPVAPSSRAARSSHIAPLLQSSSPTPPGPTGSAAYVAVPTPNSSSPGPAGRPAGAMLYHSWVSEITEIGAF</sequence>
<protein>
    <recommendedName>
        <fullName>Hairy/enhancer-of-split related with YRPW motif-like protein</fullName>
        <shortName>hHeyL</shortName>
    </recommendedName>
    <alternativeName>
        <fullName>Class B basic helix-loop-helix protein 33</fullName>
        <shortName>bHLHb33</shortName>
    </alternativeName>
    <alternativeName>
        <fullName>Hairy-related transcription factor 3</fullName>
        <shortName>HRT-3</shortName>
        <shortName>hHRT3</shortName>
    </alternativeName>
</protein>
<proteinExistence type="evidence at protein level"/>
<feature type="chain" id="PRO_0000286429" description="Hairy/enhancer-of-split related with YRPW motif-like protein">
    <location>
        <begin position="1"/>
        <end position="328"/>
    </location>
</feature>
<feature type="domain" description="bHLH" evidence="3">
    <location>
        <begin position="43"/>
        <end position="98"/>
    </location>
</feature>
<feature type="domain" description="Orange" evidence="2">
    <location>
        <begin position="116"/>
        <end position="153"/>
    </location>
</feature>
<feature type="region of interest" description="Disordered" evidence="4">
    <location>
        <begin position="1"/>
        <end position="57"/>
    </location>
</feature>
<feature type="region of interest" description="Transcriptional repression and interaction with NCOR1 and SIN3A" evidence="1">
    <location>
        <begin position="42"/>
        <end position="111"/>
    </location>
</feature>
<feature type="region of interest" description="Disordered" evidence="4">
    <location>
        <begin position="239"/>
        <end position="308"/>
    </location>
</feature>
<feature type="compositionally biased region" description="Polar residues" evidence="4">
    <location>
        <begin position="24"/>
        <end position="42"/>
    </location>
</feature>
<feature type="compositionally biased region" description="Low complexity" evidence="4">
    <location>
        <begin position="261"/>
        <end position="270"/>
    </location>
</feature>
<feature type="sequence variant" id="VAR_032112" description="In dbSNP:rs784625." evidence="5 7">
    <original>H</original>
    <variation>R</variation>
    <location>
        <position position="47"/>
    </location>
</feature>
<keyword id="KW-0217">Developmental protein</keyword>
<keyword id="KW-0238">DNA-binding</keyword>
<keyword id="KW-0914">Notch signaling pathway</keyword>
<keyword id="KW-0539">Nucleus</keyword>
<keyword id="KW-1267">Proteomics identification</keyword>
<keyword id="KW-1185">Reference proteome</keyword>
<keyword id="KW-0678">Repressor</keyword>
<keyword id="KW-0804">Transcription</keyword>
<keyword id="KW-0805">Transcription regulation</keyword>